<protein>
    <recommendedName>
        <fullName evidence="4">Basic phospholipase A2 Cll-N6</fullName>
        <shortName>svPLA2</shortName>
        <ecNumber evidence="3">3.1.1.4</ecNumber>
    </recommendedName>
    <alternativeName>
        <fullName>Phosphatidylcholine 2-acylhydrolase</fullName>
    </alternativeName>
</protein>
<name>PA2B3_CROLL</name>
<evidence type="ECO:0000250" key="1"/>
<evidence type="ECO:0000250" key="2">
    <source>
        <dbReference type="UniProtKB" id="O42187"/>
    </source>
</evidence>
<evidence type="ECO:0000269" key="3">
    <source>
    </source>
</evidence>
<evidence type="ECO:0000303" key="4">
    <source>
    </source>
</evidence>
<evidence type="ECO:0000305" key="5"/>
<evidence type="ECO:0000305" key="6">
    <source>
    </source>
</evidence>
<evidence type="ECO:0000312" key="7">
    <source>
        <dbReference type="EMBL" id="AUS82461.1"/>
    </source>
</evidence>
<reference evidence="7" key="1">
    <citation type="journal article" date="2018" name="Mol. Biol. Evol.">
        <title>A single mutation unlocks cascading exaptations in the origin of a potent pitviper neurotoxin.</title>
        <authorList>
            <person name="Whittington A.C."/>
            <person name="Mason A.J."/>
            <person name="Rokyta D.R."/>
        </authorList>
    </citation>
    <scope>NUCLEOTIDE SEQUENCE [LARGE SCALE MRNA]</scope>
    <source>
        <tissue>Venom gland</tissue>
    </source>
</reference>
<reference key="2">
    <citation type="journal article" date="2004" name="Biochem. J.">
        <title>Molecular evolution and structure-function relationships of crotoxin-like and asparagine-6-containing phospholipases A2 in pit viper venoms.</title>
        <authorList>
            <person name="Chen Y.-H."/>
            <person name="Wang Y.-M."/>
            <person name="Hseu M.-J."/>
            <person name="Tsai I.-H."/>
        </authorList>
    </citation>
    <scope>PROTEIN SEQUENCE OF 17-39</scope>
    <scope>FUNCTION</scope>
    <scope>CATALYTIC ACTIVITY</scope>
    <scope>BIOPHYSICOCHEMICAL PROPERTIES</scope>
    <scope>SUBUNIT</scope>
    <scope>MASS SPECTROMETRY</scope>
    <scope>SUBCELLULAR LOCATION</scope>
    <source>
        <tissue>Venom</tissue>
    </source>
</reference>
<sequence>MRTFWIVAVLLVGVEGNLLQFNKMIKIMTKKNAIPFYTSYGCYCGWGGRGRPKDATDRCCFVHDCCYEKLTDCSPKTARYSYSWKSGVIICGEGTPCEKQICECDRAAAVCFGANLSTYKKRYMFYPDLLCTDPSEKC</sequence>
<feature type="signal peptide" evidence="3">
    <location>
        <begin position="1"/>
        <end position="16"/>
    </location>
</feature>
<feature type="chain" id="PRO_0000418575" description="Basic phospholipase A2 Cll-N6" evidence="6">
    <location>
        <begin position="17"/>
        <end position="138"/>
    </location>
</feature>
<feature type="active site" evidence="2">
    <location>
        <position position="63"/>
    </location>
</feature>
<feature type="active site" evidence="2">
    <location>
        <position position="105"/>
    </location>
</feature>
<feature type="binding site" evidence="2">
    <location>
        <position position="43"/>
    </location>
    <ligand>
        <name>Ca(2+)</name>
        <dbReference type="ChEBI" id="CHEBI:29108"/>
    </ligand>
</feature>
<feature type="binding site" evidence="2">
    <location>
        <position position="45"/>
    </location>
    <ligand>
        <name>Ca(2+)</name>
        <dbReference type="ChEBI" id="CHEBI:29108"/>
    </ligand>
</feature>
<feature type="binding site" evidence="2">
    <location>
        <position position="47"/>
    </location>
    <ligand>
        <name>Ca(2+)</name>
        <dbReference type="ChEBI" id="CHEBI:29108"/>
    </ligand>
</feature>
<feature type="binding site" evidence="2">
    <location>
        <position position="64"/>
    </location>
    <ligand>
        <name>Ca(2+)</name>
        <dbReference type="ChEBI" id="CHEBI:29108"/>
    </ligand>
</feature>
<feature type="disulfide bond" evidence="2">
    <location>
        <begin position="42"/>
        <end position="131"/>
    </location>
</feature>
<feature type="disulfide bond" evidence="2">
    <location>
        <begin position="44"/>
        <end position="60"/>
    </location>
</feature>
<feature type="disulfide bond" evidence="2">
    <location>
        <begin position="59"/>
        <end position="111"/>
    </location>
</feature>
<feature type="disulfide bond" evidence="2">
    <location>
        <begin position="65"/>
        <end position="138"/>
    </location>
</feature>
<feature type="disulfide bond" evidence="2">
    <location>
        <begin position="66"/>
        <end position="104"/>
    </location>
</feature>
<feature type="disulfide bond" evidence="2">
    <location>
        <begin position="73"/>
        <end position="97"/>
    </location>
</feature>
<feature type="disulfide bond" evidence="2">
    <location>
        <begin position="91"/>
        <end position="102"/>
    </location>
</feature>
<feature type="sequence conflict" description="In Ref. 2; AA sequence." evidence="5" ref="2">
    <original>I</original>
    <variation>F</variation>
    <location>
        <position position="34"/>
    </location>
</feature>
<proteinExistence type="evidence at protein level"/>
<comment type="function">
    <text evidence="3">Snake venom phospholipase A2 (PLA2) that shows myotoxic activities. PLA2 catalyzes the calcium-dependent hydrolysis of the 2-acyl groups in 3-sn-phosphoglycerides.</text>
</comment>
<comment type="catalytic activity">
    <reaction evidence="3">
        <text>a 1,2-diacyl-sn-glycero-3-phosphocholine + H2O = a 1-acyl-sn-glycero-3-phosphocholine + a fatty acid + H(+)</text>
        <dbReference type="Rhea" id="RHEA:15801"/>
        <dbReference type="ChEBI" id="CHEBI:15377"/>
        <dbReference type="ChEBI" id="CHEBI:15378"/>
        <dbReference type="ChEBI" id="CHEBI:28868"/>
        <dbReference type="ChEBI" id="CHEBI:57643"/>
        <dbReference type="ChEBI" id="CHEBI:58168"/>
        <dbReference type="EC" id="3.1.1.4"/>
    </reaction>
</comment>
<comment type="cofactor">
    <cofactor evidence="1">
        <name>Ca(2+)</name>
        <dbReference type="ChEBI" id="CHEBI:29108"/>
    </cofactor>
    <text evidence="1">Binds 1 Ca(2+) ion.</text>
</comment>
<comment type="biophysicochemical properties">
    <kinetics>
        <Vmax evidence="3">294.0 umol/min/mg enzyme with DPPC + deoxycholate as substrate (at pH 7.4 and 37 degrees Celsius)</Vmax>
        <Vmax evidence="3">7.0 umol/min/mg enzyme with DPPC + Triton X-100 as substrate (at pH 7.4 and 37 degrees Celsius)</Vmax>
        <text>When tested as a monomer.</text>
    </kinetics>
</comment>
<comment type="subunit">
    <text evidence="3">Monomer.</text>
</comment>
<comment type="subcellular location">
    <subcellularLocation>
        <location evidence="3">Secreted</location>
    </subcellularLocation>
</comment>
<comment type="tissue specificity">
    <text evidence="6">Expressed by the venom gland.</text>
</comment>
<comment type="mass spectrometry"/>
<comment type="similarity">
    <text evidence="5">Belongs to the phospholipase A2 family. Group II subfamily.</text>
</comment>
<organism>
    <name type="scientific">Crotalus lepidus lepidus</name>
    <name type="common">Mottled rock rattlesnake</name>
    <dbReference type="NCBI Taxonomy" id="992932"/>
    <lineage>
        <taxon>Eukaryota</taxon>
        <taxon>Metazoa</taxon>
        <taxon>Chordata</taxon>
        <taxon>Craniata</taxon>
        <taxon>Vertebrata</taxon>
        <taxon>Euteleostomi</taxon>
        <taxon>Lepidosauria</taxon>
        <taxon>Squamata</taxon>
        <taxon>Bifurcata</taxon>
        <taxon>Unidentata</taxon>
        <taxon>Episquamata</taxon>
        <taxon>Toxicofera</taxon>
        <taxon>Serpentes</taxon>
        <taxon>Colubroidea</taxon>
        <taxon>Viperidae</taxon>
        <taxon>Crotalinae</taxon>
        <taxon>Crotalus</taxon>
    </lineage>
</organism>
<dbReference type="EC" id="3.1.1.4" evidence="3"/>
<dbReference type="EMBL" id="MF974427">
    <property type="protein sequence ID" value="AUS82461.1"/>
    <property type="molecule type" value="mRNA"/>
</dbReference>
<dbReference type="GO" id="GO:0005576">
    <property type="term" value="C:extracellular region"/>
    <property type="evidence" value="ECO:0007669"/>
    <property type="project" value="UniProtKB-SubCell"/>
</dbReference>
<dbReference type="GO" id="GO:0046872">
    <property type="term" value="F:metal ion binding"/>
    <property type="evidence" value="ECO:0007669"/>
    <property type="project" value="UniProtKB-KW"/>
</dbReference>
<dbReference type="GO" id="GO:0004623">
    <property type="term" value="F:phospholipase A2 activity"/>
    <property type="evidence" value="ECO:0007669"/>
    <property type="project" value="UniProtKB-EC"/>
</dbReference>
<dbReference type="GO" id="GO:0090729">
    <property type="term" value="F:toxin activity"/>
    <property type="evidence" value="ECO:0007669"/>
    <property type="project" value="UniProtKB-KW"/>
</dbReference>
<dbReference type="GO" id="GO:0016042">
    <property type="term" value="P:lipid catabolic process"/>
    <property type="evidence" value="ECO:0007669"/>
    <property type="project" value="UniProtKB-KW"/>
</dbReference>
<dbReference type="CDD" id="cd00125">
    <property type="entry name" value="PLA2c"/>
    <property type="match status" value="1"/>
</dbReference>
<dbReference type="FunFam" id="1.20.90.10:FF:000001">
    <property type="entry name" value="Basic phospholipase A2 homolog"/>
    <property type="match status" value="1"/>
</dbReference>
<dbReference type="Gene3D" id="1.20.90.10">
    <property type="entry name" value="Phospholipase A2 domain"/>
    <property type="match status" value="1"/>
</dbReference>
<dbReference type="InterPro" id="IPR001211">
    <property type="entry name" value="PLipase_A2"/>
</dbReference>
<dbReference type="InterPro" id="IPR033112">
    <property type="entry name" value="PLipase_A2_Asp_AS"/>
</dbReference>
<dbReference type="InterPro" id="IPR016090">
    <property type="entry name" value="PLipase_A2_dom"/>
</dbReference>
<dbReference type="InterPro" id="IPR036444">
    <property type="entry name" value="PLipase_A2_dom_sf"/>
</dbReference>
<dbReference type="InterPro" id="IPR033113">
    <property type="entry name" value="PLipase_A2_His_AS"/>
</dbReference>
<dbReference type="PANTHER" id="PTHR11716">
    <property type="entry name" value="PHOSPHOLIPASE A2 FAMILY MEMBER"/>
    <property type="match status" value="1"/>
</dbReference>
<dbReference type="PANTHER" id="PTHR11716:SF9">
    <property type="entry name" value="PHOSPHOLIPASE A2, MEMBRANE ASSOCIATED"/>
    <property type="match status" value="1"/>
</dbReference>
<dbReference type="Pfam" id="PF00068">
    <property type="entry name" value="Phospholip_A2_1"/>
    <property type="match status" value="1"/>
</dbReference>
<dbReference type="PRINTS" id="PR00389">
    <property type="entry name" value="PHPHLIPASEA2"/>
</dbReference>
<dbReference type="SMART" id="SM00085">
    <property type="entry name" value="PA2c"/>
    <property type="match status" value="1"/>
</dbReference>
<dbReference type="SUPFAM" id="SSF48619">
    <property type="entry name" value="Phospholipase A2, PLA2"/>
    <property type="match status" value="1"/>
</dbReference>
<keyword id="KW-0106">Calcium</keyword>
<keyword id="KW-0903">Direct protein sequencing</keyword>
<keyword id="KW-1015">Disulfide bond</keyword>
<keyword id="KW-0378">Hydrolase</keyword>
<keyword id="KW-0442">Lipid degradation</keyword>
<keyword id="KW-0443">Lipid metabolism</keyword>
<keyword id="KW-0479">Metal-binding</keyword>
<keyword id="KW-0959">Myotoxin</keyword>
<keyword id="KW-0964">Secreted</keyword>
<keyword id="KW-0732">Signal</keyword>
<keyword id="KW-0800">Toxin</keyword>
<accession>P0DJN7</accession>
<accession>A0A2I7YRZ0</accession>